<comment type="function">
    <text evidence="1 2">Multifunctional cytokine mainly produced by T-cells that plays a regulatory role in immune response, tissue homeostasis, host defense, and oncogenesis. Possesses antiviral functions and induces the type I interferon response during influenza infection. Signals through two receptor complexes IL20RA/IL20RB or IL20RB/IL22RA1. In turn, stimulates the JAK1-STAT3 and MAPK pathways and promotes the secretion of pro-inflammatory mediators including IL8 and MMP1 (By similarity). Intracellularly, maintains endoplasmic reticulum homeostasis by restricting the eIF2alpha-CHOP pathway-mediated stress signal (By similarity). In addition, acts as a quality control mechanism for the ubiquitin proteasome system by alerting the cell to proteasome dysfunction through activation of PKR/EIF2AK2 (By similarity).</text>
</comment>
<comment type="subcellular location">
    <subcellularLocation>
        <location evidence="1">Secreted</location>
    </subcellularLocation>
</comment>
<comment type="PTM">
    <text evidence="1">Glycosylated.</text>
</comment>
<comment type="PTM">
    <text evidence="1">Ubiquitination at Lys-99 promotes proteasomal degradation.</text>
</comment>
<comment type="similarity">
    <text evidence="4">Belongs to the IL-10 family.</text>
</comment>
<keyword id="KW-0053">Apoptosis</keyword>
<keyword id="KW-0202">Cytokine</keyword>
<keyword id="KW-1015">Disulfide bond</keyword>
<keyword id="KW-0325">Glycoprotein</keyword>
<keyword id="KW-1017">Isopeptide bond</keyword>
<keyword id="KW-1185">Reference proteome</keyword>
<keyword id="KW-0964">Secreted</keyword>
<keyword id="KW-0732">Signal</keyword>
<keyword id="KW-0832">Ubl conjugation</keyword>
<dbReference type="EMBL" id="AF269251">
    <property type="protein sequence ID" value="AAF75553.1"/>
    <property type="molecule type" value="mRNA"/>
</dbReference>
<dbReference type="RefSeq" id="NP_579845.1">
    <property type="nucleotide sequence ID" value="NM_133311.1"/>
</dbReference>
<dbReference type="SMR" id="Q9JI24"/>
<dbReference type="FunCoup" id="Q9JI24">
    <property type="interactions" value="15"/>
</dbReference>
<dbReference type="STRING" id="10116.ENSRNOP00000006106"/>
<dbReference type="GlyCosmos" id="Q9JI24">
    <property type="glycosylation" value="1 site, No reported glycans"/>
</dbReference>
<dbReference type="GlyGen" id="Q9JI24">
    <property type="glycosylation" value="1 site"/>
</dbReference>
<dbReference type="PhosphoSitePlus" id="Q9JI24"/>
<dbReference type="PaxDb" id="10116-ENSRNOP00000006106"/>
<dbReference type="Ensembl" id="ENSRNOT00000006106.4">
    <property type="protein sequence ID" value="ENSRNOP00000006106.2"/>
    <property type="gene ID" value="ENSRNOG00000004470.4"/>
</dbReference>
<dbReference type="GeneID" id="170819"/>
<dbReference type="KEGG" id="rno:170819"/>
<dbReference type="UCSC" id="RGD:621484">
    <property type="organism name" value="rat"/>
</dbReference>
<dbReference type="AGR" id="RGD:621484"/>
<dbReference type="CTD" id="11009"/>
<dbReference type="RGD" id="621484">
    <property type="gene designation" value="Il24"/>
</dbReference>
<dbReference type="eggNOG" id="ENOG502SUXZ">
    <property type="taxonomic scope" value="Eukaryota"/>
</dbReference>
<dbReference type="GeneTree" id="ENSGT00950000183124"/>
<dbReference type="HOGENOM" id="CLU_098690_0_0_1"/>
<dbReference type="InParanoid" id="Q9JI24"/>
<dbReference type="OMA" id="WMGKFYR"/>
<dbReference type="OrthoDB" id="81357at9989"/>
<dbReference type="PhylomeDB" id="Q9JI24"/>
<dbReference type="TreeFam" id="TF333253"/>
<dbReference type="Reactome" id="R-RNO-8854691">
    <property type="pathway name" value="Interleukin-20 family signaling"/>
</dbReference>
<dbReference type="PRO" id="PR:Q9JI24"/>
<dbReference type="Proteomes" id="UP000002494">
    <property type="component" value="Chromosome 13"/>
</dbReference>
<dbReference type="Bgee" id="ENSRNOG00000004470">
    <property type="expression patterns" value="Expressed in spleen and 9 other cell types or tissues"/>
</dbReference>
<dbReference type="GO" id="GO:0005615">
    <property type="term" value="C:extracellular space"/>
    <property type="evidence" value="ECO:0000314"/>
    <property type="project" value="RGD"/>
</dbReference>
<dbReference type="GO" id="GO:0005125">
    <property type="term" value="F:cytokine activity"/>
    <property type="evidence" value="ECO:0000318"/>
    <property type="project" value="GO_Central"/>
</dbReference>
<dbReference type="GO" id="GO:0006915">
    <property type="term" value="P:apoptotic process"/>
    <property type="evidence" value="ECO:0007669"/>
    <property type="project" value="UniProtKB-KW"/>
</dbReference>
<dbReference type="GO" id="GO:0071353">
    <property type="term" value="P:cellular response to interleukin-4"/>
    <property type="evidence" value="ECO:0000270"/>
    <property type="project" value="RGD"/>
</dbReference>
<dbReference type="GO" id="GO:0071222">
    <property type="term" value="P:cellular response to lipopolysaccharide"/>
    <property type="evidence" value="ECO:0000270"/>
    <property type="project" value="RGD"/>
</dbReference>
<dbReference type="GO" id="GO:0006955">
    <property type="term" value="P:immune response"/>
    <property type="evidence" value="ECO:0000318"/>
    <property type="project" value="GO_Central"/>
</dbReference>
<dbReference type="GO" id="GO:0030336">
    <property type="term" value="P:negative regulation of cell migration"/>
    <property type="evidence" value="ECO:0000314"/>
    <property type="project" value="RGD"/>
</dbReference>
<dbReference type="GO" id="GO:0008285">
    <property type="term" value="P:negative regulation of cell population proliferation"/>
    <property type="evidence" value="ECO:0000314"/>
    <property type="project" value="RGD"/>
</dbReference>
<dbReference type="GO" id="GO:0043065">
    <property type="term" value="P:positive regulation of apoptotic process"/>
    <property type="evidence" value="ECO:0000266"/>
    <property type="project" value="RGD"/>
</dbReference>
<dbReference type="GO" id="GO:0008284">
    <property type="term" value="P:positive regulation of cell population proliferation"/>
    <property type="evidence" value="ECO:0000315"/>
    <property type="project" value="RGD"/>
</dbReference>
<dbReference type="FunFam" id="1.20.1250.10:FF:000038">
    <property type="entry name" value="Interleukin 24"/>
    <property type="match status" value="1"/>
</dbReference>
<dbReference type="Gene3D" id="1.20.1250.10">
    <property type="match status" value="1"/>
</dbReference>
<dbReference type="InterPro" id="IPR009079">
    <property type="entry name" value="4_helix_cytokine-like_core"/>
</dbReference>
<dbReference type="InterPro" id="IPR020443">
    <property type="entry name" value="IL-10/19/20/24/26"/>
</dbReference>
<dbReference type="InterPro" id="IPR020423">
    <property type="entry name" value="IL-10_CS"/>
</dbReference>
<dbReference type="InterPro" id="IPR020444">
    <property type="entry name" value="IL-24"/>
</dbReference>
<dbReference type="PANTHER" id="PTHR48482">
    <property type="entry name" value="INTERLEUKIN-19-RELATED"/>
    <property type="match status" value="1"/>
</dbReference>
<dbReference type="PANTHER" id="PTHR48482:SF4">
    <property type="entry name" value="INTERLEUKIN-24"/>
    <property type="match status" value="1"/>
</dbReference>
<dbReference type="PRINTS" id="PR01937">
    <property type="entry name" value="INTRLEUKIN24"/>
</dbReference>
<dbReference type="SUPFAM" id="SSF47266">
    <property type="entry name" value="4-helical cytokines"/>
    <property type="match status" value="1"/>
</dbReference>
<dbReference type="PROSITE" id="PS00520">
    <property type="entry name" value="INTERLEUKIN_10"/>
    <property type="match status" value="1"/>
</dbReference>
<protein>
    <recommendedName>
        <fullName>Interleukin-24</fullName>
        <shortName>IL-24</shortName>
    </recommendedName>
    <alternativeName>
        <fullName>Cytokine-like protein Mob-5</fullName>
    </alternativeName>
</protein>
<name>IL24_RAT</name>
<reference key="1">
    <citation type="journal article" date="2000" name="J. Biol. Chem.">
        <title>Identification of a novel ligand-receptor pair constitutively activated by ras oncogenes.</title>
        <authorList>
            <person name="Zhang R."/>
            <person name="Tan Z."/>
            <person name="Liang P."/>
        </authorList>
    </citation>
    <scope>NUCLEOTIDE SEQUENCE [MRNA]</scope>
</reference>
<proteinExistence type="evidence at transcript level"/>
<gene>
    <name type="primary">Il24</name>
    <name type="synonym">Mob5</name>
</gene>
<accession>Q9JI24</accession>
<feature type="signal peptide" evidence="3">
    <location>
        <begin position="1"/>
        <end position="28"/>
    </location>
</feature>
<feature type="chain" id="PRO_0000015388" description="Interleukin-24">
    <location>
        <begin position="29"/>
        <end position="183"/>
    </location>
</feature>
<feature type="glycosylation site" description="N-linked (GlcNAc...) asparagine" evidence="3">
    <location>
        <position position="76"/>
    </location>
</feature>
<feature type="disulfide bond" evidence="1">
    <location>
        <begin position="36"/>
        <end position="83"/>
    </location>
</feature>
<feature type="cross-link" description="Glycyl lysine isopeptide (Lys-Gly) (interchain with G-Cter in ubiquitin)" evidence="1">
    <location>
        <position position="99"/>
    </location>
</feature>
<sequence length="183" mass="21096">MQTSLRQQILPGLSLILLVLNQVPELQGQEFRFGPCQVTGVVLPELWEAFWTVKNTVKTQDELTSVRLLKPQVLQNVSDAESCYLAHSLLKFYLNTVFKNYHSKIVKFKVLKSFSTLANNFLVIMSKLQPSKDNAMLPISDSARRRFLLYHRTFKQLDIEVALAKAFGEVDILLAWMQNFYQL</sequence>
<organism>
    <name type="scientific">Rattus norvegicus</name>
    <name type="common">Rat</name>
    <dbReference type="NCBI Taxonomy" id="10116"/>
    <lineage>
        <taxon>Eukaryota</taxon>
        <taxon>Metazoa</taxon>
        <taxon>Chordata</taxon>
        <taxon>Craniata</taxon>
        <taxon>Vertebrata</taxon>
        <taxon>Euteleostomi</taxon>
        <taxon>Mammalia</taxon>
        <taxon>Eutheria</taxon>
        <taxon>Euarchontoglires</taxon>
        <taxon>Glires</taxon>
        <taxon>Rodentia</taxon>
        <taxon>Myomorpha</taxon>
        <taxon>Muroidea</taxon>
        <taxon>Muridae</taxon>
        <taxon>Murinae</taxon>
        <taxon>Rattus</taxon>
    </lineage>
</organism>
<evidence type="ECO:0000250" key="1">
    <source>
        <dbReference type="UniProtKB" id="Q13007"/>
    </source>
</evidence>
<evidence type="ECO:0000250" key="2">
    <source>
        <dbReference type="UniProtKB" id="Q925S4"/>
    </source>
</evidence>
<evidence type="ECO:0000255" key="3"/>
<evidence type="ECO:0000305" key="4"/>